<accession>Q8NV65</accession>
<organism>
    <name type="scientific">Staphylococcus aureus (strain MW2)</name>
    <dbReference type="NCBI Taxonomy" id="196620"/>
    <lineage>
        <taxon>Bacteria</taxon>
        <taxon>Bacillati</taxon>
        <taxon>Bacillota</taxon>
        <taxon>Bacilli</taxon>
        <taxon>Bacillales</taxon>
        <taxon>Staphylococcaceae</taxon>
        <taxon>Staphylococcus</taxon>
    </lineage>
</organism>
<sequence length="412" mass="45053">MNDLIINHIAELILPRSTDKPLKGKELDELNVVKNGTVVIKDGKIVYAGTHTDDYDATETIDASGKVVSPALVDAHTHLTFGGSREHEMSLKRQGKSYLEILEMGGGILSTVNATRETSEDDLFKKAEHDLLTMIKHGVLAVESKSGYGLDRENELKQLKVSNRLAEKYDLDMKHTFLGPHAVPKEASSNEAFLEEMIALLPEVKQYADFADIFCETGVFTIEQSQHYMQKAKEAGFKVKIHADEIDPLGGLELAIDEQAISADHLVASSDKGKEKLRNSDTVAVLLPATTFYLGKEDYADARGMLDNNGAIALATDYNPGSSVTNNLQLVMAIAALKLKLSPNEVWNAVTVNAAKAIDINAGTINTGDKANLVIWDAPNHEYIPYHFGINHAEKVIKDGKVIVDNTLSFKA</sequence>
<comment type="function">
    <text evidence="1">Catalyzes the hydrolytic cleavage of the carbon-nitrogen bond in imidazolone-5-propanoate to yield N-formimidoyl-L-glutamate. It is the third step in the universal histidine degradation pathway.</text>
</comment>
<comment type="catalytic activity">
    <reaction evidence="1">
        <text>4-imidazolone-5-propanoate + H2O = N-formimidoyl-L-glutamate</text>
        <dbReference type="Rhea" id="RHEA:23660"/>
        <dbReference type="ChEBI" id="CHEBI:15377"/>
        <dbReference type="ChEBI" id="CHEBI:58928"/>
        <dbReference type="ChEBI" id="CHEBI:77893"/>
        <dbReference type="EC" id="3.5.2.7"/>
    </reaction>
</comment>
<comment type="cofactor">
    <cofactor evidence="1">
        <name>Zn(2+)</name>
        <dbReference type="ChEBI" id="CHEBI:29105"/>
    </cofactor>
    <cofactor evidence="1">
        <name>Fe(3+)</name>
        <dbReference type="ChEBI" id="CHEBI:29034"/>
    </cofactor>
    <text evidence="1">Binds 1 zinc or iron ion per subunit.</text>
</comment>
<comment type="pathway">
    <text evidence="1">Amino-acid degradation; L-histidine degradation into L-glutamate; N-formimidoyl-L-glutamate from L-histidine: step 3/3.</text>
</comment>
<comment type="subcellular location">
    <subcellularLocation>
        <location evidence="1">Cytoplasm</location>
    </subcellularLocation>
</comment>
<comment type="similarity">
    <text evidence="1">Belongs to the metallo-dependent hydrolases superfamily. HutI family.</text>
</comment>
<reference key="1">
    <citation type="journal article" date="2002" name="Lancet">
        <title>Genome and virulence determinants of high virulence community-acquired MRSA.</title>
        <authorList>
            <person name="Baba T."/>
            <person name="Takeuchi F."/>
            <person name="Kuroda M."/>
            <person name="Yuzawa H."/>
            <person name="Aoki K."/>
            <person name="Oguchi A."/>
            <person name="Nagai Y."/>
            <person name="Iwama N."/>
            <person name="Asano K."/>
            <person name="Naimi T."/>
            <person name="Kuroda H."/>
            <person name="Cui L."/>
            <person name="Yamamoto K."/>
            <person name="Hiramatsu K."/>
        </authorList>
    </citation>
    <scope>NUCLEOTIDE SEQUENCE [LARGE SCALE GENOMIC DNA]</scope>
    <source>
        <strain>MW2</strain>
    </source>
</reference>
<protein>
    <recommendedName>
        <fullName evidence="1">Imidazolonepropionase</fullName>
        <ecNumber evidence="1">3.5.2.7</ecNumber>
    </recommendedName>
    <alternativeName>
        <fullName evidence="1">Imidazolone-5-propionate hydrolase</fullName>
    </alternativeName>
</protein>
<name>HUTI_STAAW</name>
<proteinExistence type="inferred from homology"/>
<gene>
    <name evidence="1" type="primary">hutI</name>
    <name type="ordered locus">MW2251</name>
</gene>
<dbReference type="EC" id="3.5.2.7" evidence="1"/>
<dbReference type="EMBL" id="BA000033">
    <property type="protein sequence ID" value="BAB96116.1"/>
    <property type="molecule type" value="Genomic_DNA"/>
</dbReference>
<dbReference type="RefSeq" id="WP_000998766.1">
    <property type="nucleotide sequence ID" value="NC_003923.1"/>
</dbReference>
<dbReference type="SMR" id="Q8NV65"/>
<dbReference type="KEGG" id="sam:MW2251"/>
<dbReference type="HOGENOM" id="CLU_041647_0_1_9"/>
<dbReference type="UniPathway" id="UPA00379">
    <property type="reaction ID" value="UER00551"/>
</dbReference>
<dbReference type="GO" id="GO:0005737">
    <property type="term" value="C:cytoplasm"/>
    <property type="evidence" value="ECO:0007669"/>
    <property type="project" value="UniProtKB-SubCell"/>
</dbReference>
<dbReference type="GO" id="GO:0050480">
    <property type="term" value="F:imidazolonepropionase activity"/>
    <property type="evidence" value="ECO:0007669"/>
    <property type="project" value="UniProtKB-UniRule"/>
</dbReference>
<dbReference type="GO" id="GO:0005506">
    <property type="term" value="F:iron ion binding"/>
    <property type="evidence" value="ECO:0007669"/>
    <property type="project" value="UniProtKB-UniRule"/>
</dbReference>
<dbReference type="GO" id="GO:0008270">
    <property type="term" value="F:zinc ion binding"/>
    <property type="evidence" value="ECO:0007669"/>
    <property type="project" value="UniProtKB-UniRule"/>
</dbReference>
<dbReference type="GO" id="GO:0019556">
    <property type="term" value="P:L-histidine catabolic process to glutamate and formamide"/>
    <property type="evidence" value="ECO:0007669"/>
    <property type="project" value="UniProtKB-UniPathway"/>
</dbReference>
<dbReference type="GO" id="GO:0019557">
    <property type="term" value="P:L-histidine catabolic process to glutamate and formate"/>
    <property type="evidence" value="ECO:0007669"/>
    <property type="project" value="UniProtKB-UniPathway"/>
</dbReference>
<dbReference type="CDD" id="cd01296">
    <property type="entry name" value="Imidazolone-5PH"/>
    <property type="match status" value="1"/>
</dbReference>
<dbReference type="FunFam" id="3.20.20.140:FF:000007">
    <property type="entry name" value="Imidazolonepropionase"/>
    <property type="match status" value="1"/>
</dbReference>
<dbReference type="Gene3D" id="3.20.20.140">
    <property type="entry name" value="Metal-dependent hydrolases"/>
    <property type="match status" value="1"/>
</dbReference>
<dbReference type="Gene3D" id="2.30.40.10">
    <property type="entry name" value="Urease, subunit C, domain 1"/>
    <property type="match status" value="1"/>
</dbReference>
<dbReference type="HAMAP" id="MF_00372">
    <property type="entry name" value="HutI"/>
    <property type="match status" value="1"/>
</dbReference>
<dbReference type="InterPro" id="IPR006680">
    <property type="entry name" value="Amidohydro-rel"/>
</dbReference>
<dbReference type="InterPro" id="IPR005920">
    <property type="entry name" value="HutI"/>
</dbReference>
<dbReference type="InterPro" id="IPR011059">
    <property type="entry name" value="Metal-dep_hydrolase_composite"/>
</dbReference>
<dbReference type="InterPro" id="IPR032466">
    <property type="entry name" value="Metal_Hydrolase"/>
</dbReference>
<dbReference type="NCBIfam" id="TIGR01224">
    <property type="entry name" value="hutI"/>
    <property type="match status" value="1"/>
</dbReference>
<dbReference type="PANTHER" id="PTHR42752">
    <property type="entry name" value="IMIDAZOLONEPROPIONASE"/>
    <property type="match status" value="1"/>
</dbReference>
<dbReference type="PANTHER" id="PTHR42752:SF1">
    <property type="entry name" value="IMIDAZOLONEPROPIONASE-RELATED"/>
    <property type="match status" value="1"/>
</dbReference>
<dbReference type="Pfam" id="PF01979">
    <property type="entry name" value="Amidohydro_1"/>
    <property type="match status" value="1"/>
</dbReference>
<dbReference type="SUPFAM" id="SSF51338">
    <property type="entry name" value="Composite domain of metallo-dependent hydrolases"/>
    <property type="match status" value="1"/>
</dbReference>
<dbReference type="SUPFAM" id="SSF51556">
    <property type="entry name" value="Metallo-dependent hydrolases"/>
    <property type="match status" value="1"/>
</dbReference>
<keyword id="KW-0963">Cytoplasm</keyword>
<keyword id="KW-0369">Histidine metabolism</keyword>
<keyword id="KW-0378">Hydrolase</keyword>
<keyword id="KW-0408">Iron</keyword>
<keyword id="KW-0479">Metal-binding</keyword>
<keyword id="KW-0862">Zinc</keyword>
<evidence type="ECO:0000255" key="1">
    <source>
        <dbReference type="HAMAP-Rule" id="MF_00372"/>
    </source>
</evidence>
<feature type="chain" id="PRO_0000160963" description="Imidazolonepropionase">
    <location>
        <begin position="1"/>
        <end position="412"/>
    </location>
</feature>
<feature type="binding site" evidence="1">
    <location>
        <position position="76"/>
    </location>
    <ligand>
        <name>Fe(3+)</name>
        <dbReference type="ChEBI" id="CHEBI:29034"/>
    </ligand>
</feature>
<feature type="binding site" evidence="1">
    <location>
        <position position="76"/>
    </location>
    <ligand>
        <name>Zn(2+)</name>
        <dbReference type="ChEBI" id="CHEBI:29105"/>
    </ligand>
</feature>
<feature type="binding site" evidence="1">
    <location>
        <position position="78"/>
    </location>
    <ligand>
        <name>Fe(3+)</name>
        <dbReference type="ChEBI" id="CHEBI:29034"/>
    </ligand>
</feature>
<feature type="binding site" evidence="1">
    <location>
        <position position="78"/>
    </location>
    <ligand>
        <name>Zn(2+)</name>
        <dbReference type="ChEBI" id="CHEBI:29105"/>
    </ligand>
</feature>
<feature type="binding site" evidence="1">
    <location>
        <position position="85"/>
    </location>
    <ligand>
        <name>4-imidazolone-5-propanoate</name>
        <dbReference type="ChEBI" id="CHEBI:77893"/>
    </ligand>
</feature>
<feature type="binding site" evidence="1">
    <location>
        <position position="148"/>
    </location>
    <ligand>
        <name>4-imidazolone-5-propanoate</name>
        <dbReference type="ChEBI" id="CHEBI:77893"/>
    </ligand>
</feature>
<feature type="binding site" evidence="1">
    <location>
        <position position="148"/>
    </location>
    <ligand>
        <name>N-formimidoyl-L-glutamate</name>
        <dbReference type="ChEBI" id="CHEBI:58928"/>
    </ligand>
</feature>
<feature type="binding site" evidence="1">
    <location>
        <position position="181"/>
    </location>
    <ligand>
        <name>4-imidazolone-5-propanoate</name>
        <dbReference type="ChEBI" id="CHEBI:77893"/>
    </ligand>
</feature>
<feature type="binding site" evidence="1">
    <location>
        <position position="242"/>
    </location>
    <ligand>
        <name>Fe(3+)</name>
        <dbReference type="ChEBI" id="CHEBI:29034"/>
    </ligand>
</feature>
<feature type="binding site" evidence="1">
    <location>
        <position position="242"/>
    </location>
    <ligand>
        <name>Zn(2+)</name>
        <dbReference type="ChEBI" id="CHEBI:29105"/>
    </ligand>
</feature>
<feature type="binding site" evidence="1">
    <location>
        <position position="245"/>
    </location>
    <ligand>
        <name>4-imidazolone-5-propanoate</name>
        <dbReference type="ChEBI" id="CHEBI:77893"/>
    </ligand>
</feature>
<feature type="binding site" evidence="1">
    <location>
        <position position="317"/>
    </location>
    <ligand>
        <name>Fe(3+)</name>
        <dbReference type="ChEBI" id="CHEBI:29034"/>
    </ligand>
</feature>
<feature type="binding site" evidence="1">
    <location>
        <position position="317"/>
    </location>
    <ligand>
        <name>Zn(2+)</name>
        <dbReference type="ChEBI" id="CHEBI:29105"/>
    </ligand>
</feature>
<feature type="binding site" evidence="1">
    <location>
        <position position="319"/>
    </location>
    <ligand>
        <name>N-formimidoyl-L-glutamate</name>
        <dbReference type="ChEBI" id="CHEBI:58928"/>
    </ligand>
</feature>
<feature type="binding site" evidence="1">
    <location>
        <position position="321"/>
    </location>
    <ligand>
        <name>N-formimidoyl-L-glutamate</name>
        <dbReference type="ChEBI" id="CHEBI:58928"/>
    </ligand>
</feature>
<feature type="binding site" evidence="1">
    <location>
        <position position="322"/>
    </location>
    <ligand>
        <name>4-imidazolone-5-propanoate</name>
        <dbReference type="ChEBI" id="CHEBI:77893"/>
    </ligand>
</feature>